<evidence type="ECO:0000250" key="1">
    <source>
        <dbReference type="UniProtKB" id="P53985"/>
    </source>
</evidence>
<evidence type="ECO:0000250" key="2">
    <source>
        <dbReference type="UniProtKB" id="P53986"/>
    </source>
</evidence>
<evidence type="ECO:0000250" key="3">
    <source>
        <dbReference type="UniProtKB" id="P53987"/>
    </source>
</evidence>
<evidence type="ECO:0000255" key="4"/>
<evidence type="ECO:0000305" key="5"/>
<feature type="chain" id="PRO_0000211382" description="Monocarboxylate transporter 1">
    <location>
        <begin position="1" status="less than"/>
        <end position="76" status="greater than"/>
    </location>
</feature>
<feature type="transmembrane region" description="Helical" evidence="4">
    <location>
        <begin position="1" status="less than"/>
        <end position="18"/>
    </location>
</feature>
<feature type="transmembrane region" description="Helical" evidence="4">
    <location>
        <begin position="28"/>
        <end position="48"/>
    </location>
</feature>
<feature type="transmembrane region" description="Helical" evidence="4">
    <location>
        <begin position="53"/>
        <end position="73"/>
    </location>
</feature>
<feature type="binding site" evidence="1">
    <location>
        <position position="8"/>
    </location>
    <ligand>
        <name>H(+)</name>
        <dbReference type="ChEBI" id="CHEBI:15378"/>
    </ligand>
</feature>
<feature type="binding site" evidence="1">
    <location>
        <position position="12"/>
    </location>
    <ligand>
        <name>(S)-lactate</name>
        <dbReference type="ChEBI" id="CHEBI:16651"/>
    </ligand>
</feature>
<feature type="non-terminal residue">
    <location>
        <position position="1"/>
    </location>
</feature>
<feature type="non-terminal residue">
    <location>
        <position position="76"/>
    </location>
</feature>
<reference key="1">
    <citation type="journal article" date="1997" name="Hear. Res.">
        <title>Functional evidence for a monocarboxylate transporter (MCT) in strial marginal cells and molecular evidence for MCT1 and MCT2 in stria vascularis.</title>
        <authorList>
            <person name="Shimozono M."/>
            <person name="Scofield M.A."/>
            <person name="Wangemann P."/>
        </authorList>
    </citation>
    <scope>NUCLEOTIDE SEQUENCE [MRNA]</scope>
    <source>
        <tissue>Stria vascularis</tissue>
    </source>
</reference>
<keyword id="KW-1003">Cell membrane</keyword>
<keyword id="KW-0472">Membrane</keyword>
<keyword id="KW-0769">Symport</keyword>
<keyword id="KW-0812">Transmembrane</keyword>
<keyword id="KW-1133">Transmembrane helix</keyword>
<keyword id="KW-0813">Transport</keyword>
<organism>
    <name type="scientific">Meriones unguiculatus</name>
    <name type="common">Mongolian jird</name>
    <name type="synonym">Gerbillus unguiculatus</name>
    <dbReference type="NCBI Taxonomy" id="10047"/>
    <lineage>
        <taxon>Eukaryota</taxon>
        <taxon>Metazoa</taxon>
        <taxon>Chordata</taxon>
        <taxon>Craniata</taxon>
        <taxon>Vertebrata</taxon>
        <taxon>Euteleostomi</taxon>
        <taxon>Mammalia</taxon>
        <taxon>Eutheria</taxon>
        <taxon>Euarchontoglires</taxon>
        <taxon>Glires</taxon>
        <taxon>Rodentia</taxon>
        <taxon>Myomorpha</taxon>
        <taxon>Muroidea</taxon>
        <taxon>Muridae</taxon>
        <taxon>Gerbillinae</taxon>
        <taxon>Meriones</taxon>
    </lineage>
</organism>
<sequence length="76" mass="8269">LSILAFVDMVARPSMGLAANTKWIRPRIQYFFAASVVANGVCHLLAPLSTSYIGFCVYAGVFGFAFGWLSSVLFET</sequence>
<protein>
    <recommendedName>
        <fullName>Monocarboxylate transporter 1</fullName>
        <shortName>MCT 1</shortName>
    </recommendedName>
    <alternativeName>
        <fullName>Solute carrier family 16 member 1</fullName>
    </alternativeName>
</protein>
<comment type="function">
    <text evidence="1 2 3">Bidirectional proton-coupled monocarboxylate transporter. Catalyzes the rapid transport across the plasma membrane of many monocarboxylates such as lactate, pyruvate, acetate and the ketone bodies acetoacetate and beta-hydroxybutyrate, and thus contributes to the maintenance of intracellular pH (By similarity). The transport direction is determined by the proton motive force and the concentration gradient of the substrate monocarboxylate. MCT1 is a major lactate exporter (By similarity). Plays a role in cellular responses to a high-fat diet by modulating the cellular levels of lactate and pyruvate that contribute to the regulation of central metabolic pathways and insulin secretion, with concomitant effects on plasma insulin levels and blood glucose homeostasis (By similarity). Facilitates the protonated monocarboxylate form of succinate export, that its transient protonation upon muscle cell acidification in exercising muscle and ischemic heart. Functions via alternate outward- and inward-open conformation states. Protonation and deprotonation is essential for the conformational transition (By similarity).</text>
</comment>
<comment type="catalytic activity">
    <reaction evidence="1">
        <text>(S)-lactate(in) + H(+)(in) = (S)-lactate(out) + H(+)(out)</text>
        <dbReference type="Rhea" id="RHEA:29415"/>
        <dbReference type="ChEBI" id="CHEBI:15378"/>
        <dbReference type="ChEBI" id="CHEBI:16651"/>
    </reaction>
    <physiologicalReaction direction="left-to-right" evidence="1">
        <dbReference type="Rhea" id="RHEA:29416"/>
    </physiologicalReaction>
    <physiologicalReaction direction="right-to-left" evidence="1">
        <dbReference type="Rhea" id="RHEA:29417"/>
    </physiologicalReaction>
</comment>
<comment type="catalytic activity">
    <reaction evidence="3">
        <text>acetate(out) + H(+)(out) = acetate(in) + H(+)(in)</text>
        <dbReference type="Rhea" id="RHEA:71803"/>
        <dbReference type="ChEBI" id="CHEBI:15378"/>
        <dbReference type="ChEBI" id="CHEBI:30089"/>
    </reaction>
    <physiologicalReaction direction="left-to-right" evidence="3">
        <dbReference type="Rhea" id="RHEA:71804"/>
    </physiologicalReaction>
    <physiologicalReaction direction="right-to-left" evidence="3">
        <dbReference type="Rhea" id="RHEA:71805"/>
    </physiologicalReaction>
</comment>
<comment type="catalytic activity">
    <reaction evidence="3">
        <text>acetoacetate(out) + H(+)(out) = acetoacetate(in) + H(+)(in)</text>
        <dbReference type="Rhea" id="RHEA:71775"/>
        <dbReference type="ChEBI" id="CHEBI:13705"/>
        <dbReference type="ChEBI" id="CHEBI:15378"/>
    </reaction>
    <physiologicalReaction direction="left-to-right" evidence="3">
        <dbReference type="Rhea" id="RHEA:71776"/>
    </physiologicalReaction>
    <physiologicalReaction direction="right-to-left" evidence="3">
        <dbReference type="Rhea" id="RHEA:71777"/>
    </physiologicalReaction>
</comment>
<comment type="catalytic activity">
    <reaction evidence="3">
        <text>pyruvate(out) + H(+)(out) = pyruvate(in) + H(+)(in)</text>
        <dbReference type="Rhea" id="RHEA:64720"/>
        <dbReference type="ChEBI" id="CHEBI:15361"/>
        <dbReference type="ChEBI" id="CHEBI:15378"/>
    </reaction>
</comment>
<comment type="catalytic activity">
    <reaction evidence="3">
        <text>(R)-3-hydroxybutanoate(out) + H(+)(out) = (R)-3-hydroxybutanoate(in) + H(+)(in)</text>
        <dbReference type="Rhea" id="RHEA:71795"/>
        <dbReference type="ChEBI" id="CHEBI:10983"/>
        <dbReference type="ChEBI" id="CHEBI:15378"/>
    </reaction>
    <physiologicalReaction direction="left-to-right" evidence="3">
        <dbReference type="Rhea" id="RHEA:71796"/>
    </physiologicalReaction>
    <physiologicalReaction direction="right-to-left" evidence="3">
        <dbReference type="Rhea" id="RHEA:71797"/>
    </physiologicalReaction>
</comment>
<comment type="catalytic activity">
    <reaction evidence="3">
        <text>3-methyl-2-oxobutanoate(out) + H(+)(out) = 3-methyl-2-oxobutanoate(in) + H(+)(in)</text>
        <dbReference type="Rhea" id="RHEA:71783"/>
        <dbReference type="ChEBI" id="CHEBI:11851"/>
        <dbReference type="ChEBI" id="CHEBI:15378"/>
    </reaction>
</comment>
<comment type="catalytic activity">
    <reaction evidence="3">
        <text>4-methyl-2-oxopentanoate(out) + H(+)(out) = 4-methyl-2-oxopentanoate(in) + H(+)(in)</text>
        <dbReference type="Rhea" id="RHEA:71779"/>
        <dbReference type="ChEBI" id="CHEBI:15378"/>
        <dbReference type="ChEBI" id="CHEBI:17865"/>
    </reaction>
</comment>
<comment type="catalytic activity">
    <reaction evidence="1">
        <text>succinate(in) + 2 H(+)(in) = succinate(out) + 2 H(+)(out)</text>
        <dbReference type="Rhea" id="RHEA:29303"/>
        <dbReference type="ChEBI" id="CHEBI:15378"/>
        <dbReference type="ChEBI" id="CHEBI:30031"/>
    </reaction>
    <physiologicalReaction direction="left-to-right" evidence="1">
        <dbReference type="Rhea" id="RHEA:29304"/>
    </physiologicalReaction>
</comment>
<comment type="subunit">
    <text evidence="1 3">Interacts with BSG; interaction mediates SLC16A1 targeting to the plasma membrane (By similarity). Interacts with EMB; interaction mediates SLC16A1 targeting to the plasma membrane (By similarity).</text>
</comment>
<comment type="subcellular location">
    <subcellularLocation>
        <location evidence="1">Cell membrane</location>
        <topology evidence="1">Multi-pass membrane protein</topology>
    </subcellularLocation>
    <subcellularLocation>
        <location evidence="3">Basolateral cell membrane</location>
        <topology evidence="1">Multi-pass membrane protein</topology>
    </subcellularLocation>
    <subcellularLocation>
        <location evidence="1">Apical cell membrane</location>
        <topology evidence="1">Multi-pass membrane protein</topology>
    </subcellularLocation>
    <text evidence="1">Expression at the cell surface requires the ancillary protein BSN (By similarity). Expression at the cell surface requires the ancillary proteins BSG and EMB (By similarity).</text>
</comment>
<comment type="similarity">
    <text evidence="5">Belongs to the major facilitator superfamily. Monocarboxylate porter (TC 2.A.1.13) family.</text>
</comment>
<gene>
    <name type="primary">SLC16A1</name>
    <name type="synonym">MCT1</name>
</gene>
<proteinExistence type="evidence at transcript level"/>
<name>MOT1_MERUN</name>
<dbReference type="EMBL" id="AF029766">
    <property type="protein sequence ID" value="AAB84218.1"/>
    <property type="molecule type" value="mRNA"/>
</dbReference>
<dbReference type="SMR" id="O35439"/>
<dbReference type="GO" id="GO:0016324">
    <property type="term" value="C:apical plasma membrane"/>
    <property type="evidence" value="ECO:0000250"/>
    <property type="project" value="UniProtKB"/>
</dbReference>
<dbReference type="GO" id="GO:0016323">
    <property type="term" value="C:basolateral plasma membrane"/>
    <property type="evidence" value="ECO:0007669"/>
    <property type="project" value="UniProtKB-SubCell"/>
</dbReference>
<dbReference type="GO" id="GO:0005886">
    <property type="term" value="C:plasma membrane"/>
    <property type="evidence" value="ECO:0000250"/>
    <property type="project" value="UniProtKB"/>
</dbReference>
<dbReference type="GO" id="GO:0015650">
    <property type="term" value="F:lactate:proton symporter activity"/>
    <property type="evidence" value="ECO:0000250"/>
    <property type="project" value="UniProtKB"/>
</dbReference>
<dbReference type="GO" id="GO:0015295">
    <property type="term" value="F:solute:proton symporter activity"/>
    <property type="evidence" value="ECO:0000250"/>
    <property type="project" value="UniProtKB"/>
</dbReference>
<dbReference type="GO" id="GO:0015141">
    <property type="term" value="F:succinate transmembrane transporter activity"/>
    <property type="evidence" value="ECO:0000250"/>
    <property type="project" value="UniProtKB"/>
</dbReference>
<dbReference type="GO" id="GO:0035879">
    <property type="term" value="P:plasma membrane lactate transport"/>
    <property type="evidence" value="ECO:0000250"/>
    <property type="project" value="UniProtKB"/>
</dbReference>
<dbReference type="GO" id="GO:1901475">
    <property type="term" value="P:pyruvate transmembrane transport"/>
    <property type="evidence" value="ECO:0000250"/>
    <property type="project" value="UniProtKB"/>
</dbReference>
<dbReference type="GO" id="GO:0071422">
    <property type="term" value="P:succinate transmembrane transport"/>
    <property type="evidence" value="ECO:0000250"/>
    <property type="project" value="UniProtKB"/>
</dbReference>
<dbReference type="InterPro" id="IPR050327">
    <property type="entry name" value="Proton-linked_MCT"/>
</dbReference>
<dbReference type="PANTHER" id="PTHR11360">
    <property type="entry name" value="MONOCARBOXYLATE TRANSPORTER"/>
    <property type="match status" value="1"/>
</dbReference>
<dbReference type="PANTHER" id="PTHR11360:SF24">
    <property type="entry name" value="MONOCARBOXYLATE TRANSPORTER 1"/>
    <property type="match status" value="1"/>
</dbReference>
<accession>O35439</accession>